<comment type="function">
    <text evidence="1 6 8 10 11">Mitochondrial outer membrane GTPase that mediates mitochondrial clustering and fusion (PubMed:12527753, PubMed:15297672, PubMed:23921378, PubMed:24513856). Membrane clustering requires GTPase activity (By similarity). It may involve a major rearrangement of the coiled coil domains (PubMed:15297672). Mitochondria are highly dynamic organelles, and their morphology is determined by the equilibrium between mitochondrial fusion and fission events (PubMed:12527753). Overexpression induces the formation of mitochondrial networks (in vitro). Has low GTPase activity (By similarity).</text>
</comment>
<comment type="catalytic activity">
    <reaction evidence="1">
        <text>GTP + H2O = GDP + phosphate + H(+)</text>
        <dbReference type="Rhea" id="RHEA:19669"/>
        <dbReference type="ChEBI" id="CHEBI:15377"/>
        <dbReference type="ChEBI" id="CHEBI:15378"/>
        <dbReference type="ChEBI" id="CHEBI:37565"/>
        <dbReference type="ChEBI" id="CHEBI:43474"/>
        <dbReference type="ChEBI" id="CHEBI:58189"/>
    </reaction>
</comment>
<comment type="subunit">
    <text evidence="1 2 6 8">Homodimer, also in the absence of bound GTP (By similarity). Forms higher oligomers in the presence of a transition state GTP analog (By similarity). Forms homomultimers and heteromultimers with MFN2 (PubMed:12527753). Oligomerization is essential for mitochondrion fusion (PubMed:15297672). Component of a high molecular weight multiprotein complex (By similarity). Interacts with VAT1 (By similarity). Interacts with THG1L; THG1L probably functions as a guanyl-nucleotide exchange factor/GEF, activating MFN1.</text>
</comment>
<comment type="interaction">
    <interactant intactId="EBI-9029118">
        <id>Q811U4</id>
    </interactant>
    <interactant intactId="EBI-5323863">
        <id>Q5S007</id>
        <label>LRRK2</label>
    </interactant>
    <organismsDiffer>true</organismsDiffer>
    <experiments>3</experiments>
</comment>
<comment type="subcellular location">
    <subcellularLocation>
        <location evidence="7">Mitochondrion outer membrane</location>
        <topology evidence="12">Multi-pass membrane protein</topology>
    </subcellularLocation>
</comment>
<comment type="tissue specificity">
    <text evidence="5 6 7">Detected in adult heart (PubMed:12759376). Detected in embryos (at protein level) (PubMed:12527753). Widely expressed (PubMed:11950885).</text>
</comment>
<comment type="developmental stage">
    <text evidence="6">Expressed in 8.5 dpc, 9.5 dpc, 10.5 dpc and 11.5 dpc embryos.</text>
</comment>
<comment type="domain">
    <text evidence="1">A helix bundle is formed by helices from the N-terminal and the C-terminal part of the protein. The GTPase domain cannot be expressed by itself, without the helix bundle. Rearrangement of the helix bundle and/or of the coiled coil domains may bring membranes from adjacent mitochondria into close contact, and thereby play a role in mitochondrial fusion.</text>
</comment>
<comment type="PTM">
    <text evidence="1 11">Ubiquitinated by MARCHF5 (By similarity). When mitochondria are depolarized and dysfunctional, it is ubiquitinated by a SCF (SKP1-CUL1-F-box protein) E3 ubiquitin-protein ligase complex that contains FBXO7 and PRKN. Ubiquitinated by non-degradative ubiquitin by PRKN, promoting mitochondrial fusion; deubiquitination by USP30 inhibits mitochondrial fusion (PubMed:24513856).</text>
</comment>
<comment type="disruption phenotype">
    <text evidence="6 9">Full embryonic lethality; nearly 90% of the mutant embryos have been resorbed at 11.5 dpc (PubMed:12527753). Contrary to wild-type embryonic fibroblasts that have elongated, tubular mitochondria, mutant embryonic fibroblasts contain only fragmented mitochondria (PubMed:12527753). In cultured cells, mutant mitochondria show a strongly decreased frequency of mitochondrial fusion events (PubMed:12527753). In spite of the aberrant mitochondrial morphology, there seem to be no gross defects in respiration (PubMed:12527753). Heart-specific disruption of Mfn1 does not impair heart function and has no effect on cardiomyocyte mitochondrial morphometry or respiratory function (PubMed:23620051).</text>
</comment>
<comment type="similarity">
    <text evidence="4">Belongs to the TRAFAC class dynamin-like GTPase superfamily. Dynamin/Fzo/YdjA family. Mitofusin subfamily.</text>
</comment>
<comment type="sequence caution" evidence="12">
    <conflict type="erroneous initiation">
        <sequence resource="EMBL-CDS" id="AAH47050"/>
    </conflict>
    <text>Extended N-terminus.</text>
</comment>
<comment type="sequence caution" evidence="12">
    <conflict type="erroneous initiation">
        <sequence resource="EMBL-CDS" id="BAC25260"/>
    </conflict>
    <text>Extended N-terminus.</text>
</comment>
<sequence length="741" mass="83726">MAETVSPLKHFVLAKKAITAIFGQLLEFVTEGSHFVEATYRNPELDRIASEDDLVEIQGYRNKLAVIGEVLSRRHMKVAFFGRTSSGKSSVINAMLWDKVLPSGIGHTTNCFLSVEGTDGDKAYLMTEGSDEKKSVKTVNQLAHALHMDKDLKAGCLVHVFWPKAKCALLRDDLVLVDSPGTDVTTELDIWIDKFCLDADVFVLVANSESTLMNTEKHFFHKVNERLSKPNIFILNNRWDASASEPEYMEDVRRQHMERCLHFLVEELKVVSPSEARNRIFFVSAKEVLNSRKHKAQGMPEGGGALAEGFQARLQEFQNFEQTFEECISQSAVKTKFEQHTIRAKQILDTVKNILDSVNVAAAEKRVYSMEEREDQIDRLDFIRNQMNLLTLDVKKKIKEVTEEVANKVSCAMTDEICRLSVLVDEFCSEFHPTPSVLKVYKSELNKHIEDGMGRNLADRCTNEVNASILQSQQEIIENLKPLLPAGIQNKLHTLIPCKKFDLSYDLNCHKLCSDFQEDIVFRFSLGWSSLVHRFLGSTNAQRVLLGLSEPIFQVPRSLASTPTAPSNPAAPDNAAQEELMITLITGLASLTSRTSMGIIVVGGVIWKTVGWKLISVTLSMYGALYLYERLTWTTRAKERAFKQQFVNYATEKLQMIVSFTSANCSHQVQQEMATTFARLCQQVDVTQKHLEEEIARLSKEIDQLEKIQNNSKLLRNKAVQLESELENFSKQFLHPSSGES</sequence>
<keyword id="KW-0002">3D-structure</keyword>
<keyword id="KW-0175">Coiled coil</keyword>
<keyword id="KW-0217">Developmental protein</keyword>
<keyword id="KW-0342">GTP-binding</keyword>
<keyword id="KW-0378">Hydrolase</keyword>
<keyword id="KW-0472">Membrane</keyword>
<keyword id="KW-0496">Mitochondrion</keyword>
<keyword id="KW-1000">Mitochondrion outer membrane</keyword>
<keyword id="KW-0547">Nucleotide-binding</keyword>
<keyword id="KW-1185">Reference proteome</keyword>
<keyword id="KW-0812">Transmembrane</keyword>
<keyword id="KW-1133">Transmembrane helix</keyword>
<keyword id="KW-0832">Ubl conjugation</keyword>
<gene>
    <name type="primary">Mfn1</name>
</gene>
<evidence type="ECO:0000250" key="1">
    <source>
        <dbReference type="UniProtKB" id="Q8IWA4"/>
    </source>
</evidence>
<evidence type="ECO:0000250" key="2">
    <source>
        <dbReference type="UniProtKB" id="Q8R4Z9"/>
    </source>
</evidence>
<evidence type="ECO:0000255" key="3"/>
<evidence type="ECO:0000255" key="4">
    <source>
        <dbReference type="PROSITE-ProRule" id="PRU01055"/>
    </source>
</evidence>
<evidence type="ECO:0000269" key="5">
    <source>
    </source>
</evidence>
<evidence type="ECO:0000269" key="6">
    <source>
    </source>
</evidence>
<evidence type="ECO:0000269" key="7">
    <source>
    </source>
</evidence>
<evidence type="ECO:0000269" key="8">
    <source>
    </source>
</evidence>
<evidence type="ECO:0000269" key="9">
    <source>
    </source>
</evidence>
<evidence type="ECO:0000269" key="10">
    <source>
    </source>
</evidence>
<evidence type="ECO:0000269" key="11">
    <source>
    </source>
</evidence>
<evidence type="ECO:0000305" key="12"/>
<evidence type="ECO:0007829" key="13">
    <source>
        <dbReference type="PDB" id="1T3J"/>
    </source>
</evidence>
<proteinExistence type="evidence at protein level"/>
<reference key="1">
    <citation type="journal article" date="2003" name="J. Cell Biol.">
        <title>Mitofusins Mfn1 and Mfn2 coordinately regulate mitochondrial fusion and are essential for embryonic development.</title>
        <authorList>
            <person name="Chen H."/>
            <person name="Detmer S.A."/>
            <person name="Ewald A.J."/>
            <person name="Griffin E.E."/>
            <person name="Fraser S.E."/>
            <person name="Chan D.C."/>
        </authorList>
    </citation>
    <scope>NUCLEOTIDE SEQUENCE [MRNA]</scope>
    <scope>FUNCTION</scope>
    <scope>DEVELOPMENTAL STAGE</scope>
    <scope>MULTIMERIZATION</scope>
    <scope>SUBUNIT</scope>
    <scope>DISRUPTION PHENOTYPE</scope>
    <scope>TISSUE SPECIFICITY</scope>
    <source>
        <strain>FVB/NJ</strain>
    </source>
</reference>
<reference key="2">
    <citation type="journal article" date="2005" name="Science">
        <title>The transcriptional landscape of the mammalian genome.</title>
        <authorList>
            <person name="Carninci P."/>
            <person name="Kasukawa T."/>
            <person name="Katayama S."/>
            <person name="Gough J."/>
            <person name="Frith M.C."/>
            <person name="Maeda N."/>
            <person name="Oyama R."/>
            <person name="Ravasi T."/>
            <person name="Lenhard B."/>
            <person name="Wells C."/>
            <person name="Kodzius R."/>
            <person name="Shimokawa K."/>
            <person name="Bajic V.B."/>
            <person name="Brenner S.E."/>
            <person name="Batalov S."/>
            <person name="Forrest A.R."/>
            <person name="Zavolan M."/>
            <person name="Davis M.J."/>
            <person name="Wilming L.G."/>
            <person name="Aidinis V."/>
            <person name="Allen J.E."/>
            <person name="Ambesi-Impiombato A."/>
            <person name="Apweiler R."/>
            <person name="Aturaliya R.N."/>
            <person name="Bailey T.L."/>
            <person name="Bansal M."/>
            <person name="Baxter L."/>
            <person name="Beisel K.W."/>
            <person name="Bersano T."/>
            <person name="Bono H."/>
            <person name="Chalk A.M."/>
            <person name="Chiu K.P."/>
            <person name="Choudhary V."/>
            <person name="Christoffels A."/>
            <person name="Clutterbuck D.R."/>
            <person name="Crowe M.L."/>
            <person name="Dalla E."/>
            <person name="Dalrymple B.P."/>
            <person name="de Bono B."/>
            <person name="Della Gatta G."/>
            <person name="di Bernardo D."/>
            <person name="Down T."/>
            <person name="Engstrom P."/>
            <person name="Fagiolini M."/>
            <person name="Faulkner G."/>
            <person name="Fletcher C.F."/>
            <person name="Fukushima T."/>
            <person name="Furuno M."/>
            <person name="Futaki S."/>
            <person name="Gariboldi M."/>
            <person name="Georgii-Hemming P."/>
            <person name="Gingeras T.R."/>
            <person name="Gojobori T."/>
            <person name="Green R.E."/>
            <person name="Gustincich S."/>
            <person name="Harbers M."/>
            <person name="Hayashi Y."/>
            <person name="Hensch T.K."/>
            <person name="Hirokawa N."/>
            <person name="Hill D."/>
            <person name="Huminiecki L."/>
            <person name="Iacono M."/>
            <person name="Ikeo K."/>
            <person name="Iwama A."/>
            <person name="Ishikawa T."/>
            <person name="Jakt M."/>
            <person name="Kanapin A."/>
            <person name="Katoh M."/>
            <person name="Kawasawa Y."/>
            <person name="Kelso J."/>
            <person name="Kitamura H."/>
            <person name="Kitano H."/>
            <person name="Kollias G."/>
            <person name="Krishnan S.P."/>
            <person name="Kruger A."/>
            <person name="Kummerfeld S.K."/>
            <person name="Kurochkin I.V."/>
            <person name="Lareau L.F."/>
            <person name="Lazarevic D."/>
            <person name="Lipovich L."/>
            <person name="Liu J."/>
            <person name="Liuni S."/>
            <person name="McWilliam S."/>
            <person name="Madan Babu M."/>
            <person name="Madera M."/>
            <person name="Marchionni L."/>
            <person name="Matsuda H."/>
            <person name="Matsuzawa S."/>
            <person name="Miki H."/>
            <person name="Mignone F."/>
            <person name="Miyake S."/>
            <person name="Morris K."/>
            <person name="Mottagui-Tabar S."/>
            <person name="Mulder N."/>
            <person name="Nakano N."/>
            <person name="Nakauchi H."/>
            <person name="Ng P."/>
            <person name="Nilsson R."/>
            <person name="Nishiguchi S."/>
            <person name="Nishikawa S."/>
            <person name="Nori F."/>
            <person name="Ohara O."/>
            <person name="Okazaki Y."/>
            <person name="Orlando V."/>
            <person name="Pang K.C."/>
            <person name="Pavan W.J."/>
            <person name="Pavesi G."/>
            <person name="Pesole G."/>
            <person name="Petrovsky N."/>
            <person name="Piazza S."/>
            <person name="Reed J."/>
            <person name="Reid J.F."/>
            <person name="Ring B.Z."/>
            <person name="Ringwald M."/>
            <person name="Rost B."/>
            <person name="Ruan Y."/>
            <person name="Salzberg S.L."/>
            <person name="Sandelin A."/>
            <person name="Schneider C."/>
            <person name="Schoenbach C."/>
            <person name="Sekiguchi K."/>
            <person name="Semple C.A."/>
            <person name="Seno S."/>
            <person name="Sessa L."/>
            <person name="Sheng Y."/>
            <person name="Shibata Y."/>
            <person name="Shimada H."/>
            <person name="Shimada K."/>
            <person name="Silva D."/>
            <person name="Sinclair B."/>
            <person name="Sperling S."/>
            <person name="Stupka E."/>
            <person name="Sugiura K."/>
            <person name="Sultana R."/>
            <person name="Takenaka Y."/>
            <person name="Taki K."/>
            <person name="Tammoja K."/>
            <person name="Tan S.L."/>
            <person name="Tang S."/>
            <person name="Taylor M.S."/>
            <person name="Tegner J."/>
            <person name="Teichmann S.A."/>
            <person name="Ueda H.R."/>
            <person name="van Nimwegen E."/>
            <person name="Verardo R."/>
            <person name="Wei C.L."/>
            <person name="Yagi K."/>
            <person name="Yamanishi H."/>
            <person name="Zabarovsky E."/>
            <person name="Zhu S."/>
            <person name="Zimmer A."/>
            <person name="Hide W."/>
            <person name="Bult C."/>
            <person name="Grimmond S.M."/>
            <person name="Teasdale R.D."/>
            <person name="Liu E.T."/>
            <person name="Brusic V."/>
            <person name="Quackenbush J."/>
            <person name="Wahlestedt C."/>
            <person name="Mattick J.S."/>
            <person name="Hume D.A."/>
            <person name="Kai C."/>
            <person name="Sasaki D."/>
            <person name="Tomaru Y."/>
            <person name="Fukuda S."/>
            <person name="Kanamori-Katayama M."/>
            <person name="Suzuki M."/>
            <person name="Aoki J."/>
            <person name="Arakawa T."/>
            <person name="Iida J."/>
            <person name="Imamura K."/>
            <person name="Itoh M."/>
            <person name="Kato T."/>
            <person name="Kawaji H."/>
            <person name="Kawagashira N."/>
            <person name="Kawashima T."/>
            <person name="Kojima M."/>
            <person name="Kondo S."/>
            <person name="Konno H."/>
            <person name="Nakano K."/>
            <person name="Ninomiya N."/>
            <person name="Nishio T."/>
            <person name="Okada M."/>
            <person name="Plessy C."/>
            <person name="Shibata K."/>
            <person name="Shiraki T."/>
            <person name="Suzuki S."/>
            <person name="Tagami M."/>
            <person name="Waki K."/>
            <person name="Watahiki A."/>
            <person name="Okamura-Oho Y."/>
            <person name="Suzuki H."/>
            <person name="Kawai J."/>
            <person name="Hayashizaki Y."/>
        </authorList>
    </citation>
    <scope>NUCLEOTIDE SEQUENCE [LARGE SCALE MRNA]</scope>
    <source>
        <strain>C57BL/6J</strain>
        <tissue>Hippocampus</tissue>
        <tissue>Medulla oblongata</tissue>
        <tissue>Tongue</tissue>
    </source>
</reference>
<reference key="3">
    <citation type="journal article" date="2004" name="Genome Res.">
        <title>The status, quality, and expansion of the NIH full-length cDNA project: the Mammalian Gene Collection (MGC).</title>
        <authorList>
            <consortium name="The MGC Project Team"/>
        </authorList>
    </citation>
    <scope>NUCLEOTIDE SEQUENCE [LARGE SCALE MRNA]</scope>
    <source>
        <strain>FVB/N</strain>
        <tissue>Liver</tissue>
        <tissue>Mammary tumor</tissue>
    </source>
</reference>
<reference key="4">
    <citation type="journal article" date="2002" name="J. Cell Sci.">
        <title>Membrane topology and mitochondrial targeting of mitofusins, ubiquitous mammalian homologs of the transmembrane GTPase Fzo.</title>
        <authorList>
            <person name="Rojo M."/>
            <person name="Legros F."/>
            <person name="Chateau D."/>
            <person name="Lombes A."/>
        </authorList>
    </citation>
    <scope>TISSUE SPECIFICITY</scope>
</reference>
<reference key="5">
    <citation type="journal article" date="2003" name="J. Cell Sci.">
        <title>Mitofusin-1 protein is a generally expressed mediator of mitochondrial fusion in mammalian cells.</title>
        <authorList>
            <person name="Santel A."/>
            <person name="Frank S."/>
            <person name="Gaume B."/>
            <person name="Herrler M."/>
            <person name="Youle R.J."/>
            <person name="Fuller M.T."/>
        </authorList>
    </citation>
    <scope>SUBCELLULAR LOCATION</scope>
    <scope>TISSUE SPECIFICITY</scope>
</reference>
<reference key="6">
    <citation type="journal article" date="2010" name="Cell">
        <title>A tissue-specific atlas of mouse protein phosphorylation and expression.</title>
        <authorList>
            <person name="Huttlin E.L."/>
            <person name="Jedrychowski M.P."/>
            <person name="Elias J.E."/>
            <person name="Goswami T."/>
            <person name="Rad R."/>
            <person name="Beausoleil S.A."/>
            <person name="Villen J."/>
            <person name="Haas W."/>
            <person name="Sowa M.E."/>
            <person name="Gygi S.P."/>
        </authorList>
    </citation>
    <scope>IDENTIFICATION BY MASS SPECTROMETRY [LARGE SCALE ANALYSIS]</scope>
    <source>
        <tissue>Brain</tissue>
        <tissue>Brown adipose tissue</tissue>
        <tissue>Heart</tissue>
        <tissue>Kidney</tissue>
        <tissue>Liver</tissue>
        <tissue>Lung</tissue>
        <tissue>Pancreas</tissue>
        <tissue>Spleen</tissue>
        <tissue>Testis</tissue>
    </source>
</reference>
<reference key="7">
    <citation type="journal article" date="2013" name="J. Biol. Chem.">
        <title>MiD49 and MiD51 can act independently of Mff and Fis1 in Drp1 recruitment and are specific for mitochondrial fission.</title>
        <authorList>
            <person name="Palmer C.S."/>
            <person name="Elgass K.D."/>
            <person name="Parton R.G."/>
            <person name="Osellame L.D."/>
            <person name="Stojanovski D."/>
            <person name="Ryan M.T."/>
        </authorList>
    </citation>
    <scope>FUNCTION</scope>
</reference>
<reference key="8">
    <citation type="journal article" date="2013" name="Science">
        <title>PINK1-phosphorylated mitofusin 2 is a Parkin receptor for culling damaged mitochondria.</title>
        <authorList>
            <person name="Chen Y."/>
            <person name="Dorn G.W. II"/>
        </authorList>
    </citation>
    <scope>DISRUPTION PHENOTYPE</scope>
</reference>
<reference key="9">
    <citation type="journal article" date="2014" name="Cell Res.">
        <title>A small natural molecule promotes mitochondrial fusion through inhibition of the deubiquitinase USP30.</title>
        <authorList>
            <person name="Yue W."/>
            <person name="Chen Z."/>
            <person name="Liu H."/>
            <person name="Yan C."/>
            <person name="Chen M."/>
            <person name="Feng D."/>
            <person name="Yan C."/>
            <person name="Wu H."/>
            <person name="Du L."/>
            <person name="Wang Y."/>
            <person name="Liu J."/>
            <person name="Huang X."/>
            <person name="Xia L."/>
            <person name="Liu L."/>
            <person name="Wang X."/>
            <person name="Jin H."/>
            <person name="Wang J."/>
            <person name="Song Z."/>
            <person name="Hao X."/>
            <person name="Chen Q."/>
        </authorList>
    </citation>
    <scope>FUNCTION</scope>
    <scope>UBIQUITINATION</scope>
    <scope>DEUBIQUITINATION</scope>
</reference>
<reference key="10">
    <citation type="journal article" date="2004" name="Science">
        <title>Structural basis of mitochondrial tethering by mitofusin complexes.</title>
        <authorList>
            <person name="Koshiba T."/>
            <person name="Detmer S.A."/>
            <person name="Kaiser J.T."/>
            <person name="Chen H."/>
            <person name="McCaffery J.M."/>
            <person name="Chan D.C."/>
        </authorList>
    </citation>
    <scope>X-RAY CRYSTALLOGRAPHY (2.5 ANGSTROMS) OF 660-735</scope>
    <scope>FUNCTION</scope>
    <scope>SUBUNIT</scope>
    <scope>COILED-COIL DOMAINS</scope>
</reference>
<accession>Q811U4</accession>
<accession>Q3URC4</accession>
<accession>Q811D5</accession>
<accession>Q8CEY6</accession>
<accession>Q99M10</accession>
<accession>Q9D395</accession>
<organism>
    <name type="scientific">Mus musculus</name>
    <name type="common">Mouse</name>
    <dbReference type="NCBI Taxonomy" id="10090"/>
    <lineage>
        <taxon>Eukaryota</taxon>
        <taxon>Metazoa</taxon>
        <taxon>Chordata</taxon>
        <taxon>Craniata</taxon>
        <taxon>Vertebrata</taxon>
        <taxon>Euteleostomi</taxon>
        <taxon>Mammalia</taxon>
        <taxon>Eutheria</taxon>
        <taxon>Euarchontoglires</taxon>
        <taxon>Glires</taxon>
        <taxon>Rodentia</taxon>
        <taxon>Myomorpha</taxon>
        <taxon>Muroidea</taxon>
        <taxon>Muridae</taxon>
        <taxon>Murinae</taxon>
        <taxon>Mus</taxon>
        <taxon>Mus</taxon>
    </lineage>
</organism>
<feature type="chain" id="PRO_0000127673" description="Mitofusin-1">
    <location>
        <begin position="1"/>
        <end position="741"/>
    </location>
</feature>
<feature type="topological domain" description="Cytoplasmic" evidence="3">
    <location>
        <begin position="1"/>
        <end position="584"/>
    </location>
</feature>
<feature type="transmembrane region" description="Helical; Name=1" evidence="3">
    <location>
        <begin position="585"/>
        <end position="605"/>
    </location>
</feature>
<feature type="topological domain" description="Mitochondrial intermembrane" evidence="3">
    <location>
        <begin position="606"/>
        <end position="608"/>
    </location>
</feature>
<feature type="transmembrane region" description="Helical; Name=2" evidence="3">
    <location>
        <begin position="609"/>
        <end position="629"/>
    </location>
</feature>
<feature type="topological domain" description="Cytoplasmic" evidence="3">
    <location>
        <begin position="630"/>
        <end position="741"/>
    </location>
</feature>
<feature type="domain" description="Dynamin-type G" evidence="4">
    <location>
        <begin position="72"/>
        <end position="321"/>
    </location>
</feature>
<feature type="region of interest" description="Part of a helix bundle domain, formed by helices from N-terminal and C-terminal regions" evidence="1">
    <location>
        <begin position="9"/>
        <end position="73"/>
    </location>
</feature>
<feature type="region of interest" description="G1 motif" evidence="4">
    <location>
        <begin position="82"/>
        <end position="89"/>
    </location>
</feature>
<feature type="region of interest" description="G2 motif" evidence="4">
    <location>
        <begin position="108"/>
        <end position="109"/>
    </location>
</feature>
<feature type="region of interest" description="G3 motif" evidence="4">
    <location>
        <begin position="178"/>
        <end position="181"/>
    </location>
</feature>
<feature type="region of interest" description="G4 motif" evidence="4">
    <location>
        <begin position="237"/>
        <end position="240"/>
    </location>
</feature>
<feature type="region of interest" description="G5 motif" evidence="4">
    <location>
        <position position="266"/>
    </location>
</feature>
<feature type="region of interest" description="Part of a helix bundle domain, formed by helices from N-terminal and C-terminal regions" evidence="1">
    <location>
        <begin position="338"/>
        <end position="364"/>
    </location>
</feature>
<feature type="region of interest" description="Part of a helix bundle domain, formed by helices from N-terminal and C-terminal regions" evidence="1">
    <location>
        <begin position="703"/>
        <end position="734"/>
    </location>
</feature>
<feature type="coiled-coil region" evidence="8">
    <location>
        <begin position="371"/>
        <end position="408"/>
    </location>
</feature>
<feature type="coiled-coil region" evidence="8">
    <location>
        <begin position="677"/>
        <end position="735"/>
    </location>
</feature>
<feature type="binding site" evidence="1">
    <location>
        <begin position="85"/>
        <end position="90"/>
    </location>
    <ligand>
        <name>GTP</name>
        <dbReference type="ChEBI" id="CHEBI:37565"/>
    </ligand>
</feature>
<feature type="binding site" evidence="1">
    <location>
        <begin position="237"/>
        <end position="240"/>
    </location>
    <ligand>
        <name>GTP</name>
        <dbReference type="ChEBI" id="CHEBI:37565"/>
    </ligand>
</feature>
<feature type="binding site" evidence="1">
    <location>
        <position position="284"/>
    </location>
    <ligand>
        <name>GTP</name>
        <dbReference type="ChEBI" id="CHEBI:37565"/>
    </ligand>
</feature>
<feature type="binding site" evidence="1">
    <location>
        <position position="286"/>
    </location>
    <ligand>
        <name>GTP</name>
        <dbReference type="ChEBI" id="CHEBI:37565"/>
    </ligand>
</feature>
<feature type="sequence conflict" description="In Ref. 2; BAB31111." evidence="12" ref="2">
    <original>E</original>
    <variation>G</variation>
    <location>
        <position position="209"/>
    </location>
</feature>
<feature type="sequence conflict" description="In Ref. 2; BAB31111." evidence="12" ref="2">
    <original>IS</original>
    <variation>VL</variation>
    <location>
        <begin position="328"/>
        <end position="329"/>
    </location>
</feature>
<feature type="sequence conflict" description="In Ref. 2; BAB31111." evidence="12" ref="2">
    <original>T</original>
    <variation>A</variation>
    <location>
        <position position="335"/>
    </location>
</feature>
<feature type="sequence conflict" description="In Ref. 2; BAB31111." evidence="12" ref="2">
    <original>V</original>
    <variation>A</variation>
    <location>
        <position position="521"/>
    </location>
</feature>
<feature type="sequence conflict" description="In Ref. 2; BAB31111." evidence="12" ref="2">
    <original>L</original>
    <variation>W</variation>
    <location>
        <position position="588"/>
    </location>
</feature>
<feature type="sequence conflict" description="In Ref. 2; BAB31111." evidence="12" ref="2">
    <original>L</original>
    <variation>S</variation>
    <location>
        <position position="619"/>
    </location>
</feature>
<feature type="sequence conflict" description="In Ref. 2; BAB31111." evidence="12" ref="2">
    <original>K</original>
    <variation>R</variation>
    <location>
        <position position="718"/>
    </location>
</feature>
<feature type="sequence conflict" description="In Ref. 3; AAH02133/AAH56641." evidence="12" ref="3">
    <original>V</original>
    <variation>I</variation>
    <location>
        <position position="720"/>
    </location>
</feature>
<feature type="helix" evidence="13">
    <location>
        <begin position="676"/>
        <end position="733"/>
    </location>
</feature>
<name>MFN1_MOUSE</name>
<dbReference type="EC" id="3.6.5.-" evidence="1"/>
<dbReference type="EMBL" id="AY174062">
    <property type="protein sequence ID" value="AAO34660.1"/>
    <property type="molecule type" value="mRNA"/>
</dbReference>
<dbReference type="EMBL" id="AK009490">
    <property type="protein sequence ID" value="BAC25260.1"/>
    <property type="status" value="ALT_INIT"/>
    <property type="molecule type" value="mRNA"/>
</dbReference>
<dbReference type="EMBL" id="AK018181">
    <property type="protein sequence ID" value="BAB31111.1"/>
    <property type="molecule type" value="mRNA"/>
</dbReference>
<dbReference type="EMBL" id="AK141611">
    <property type="protein sequence ID" value="BAE24764.1"/>
    <property type="molecule type" value="mRNA"/>
</dbReference>
<dbReference type="EMBL" id="BC002133">
    <property type="protein sequence ID" value="AAH02133.1"/>
    <property type="molecule type" value="mRNA"/>
</dbReference>
<dbReference type="EMBL" id="BC047050">
    <property type="protein sequence ID" value="AAH47050.1"/>
    <property type="status" value="ALT_INIT"/>
    <property type="molecule type" value="mRNA"/>
</dbReference>
<dbReference type="EMBL" id="BC056641">
    <property type="protein sequence ID" value="AAH56641.1"/>
    <property type="molecule type" value="mRNA"/>
</dbReference>
<dbReference type="CCDS" id="CCDS17296.1"/>
<dbReference type="RefSeq" id="NP_077162.2">
    <property type="nucleotide sequence ID" value="NM_024200.5"/>
</dbReference>
<dbReference type="PDB" id="1T3J">
    <property type="method" value="X-ray"/>
    <property type="resolution" value="2.50 A"/>
    <property type="chains" value="A=660-735"/>
</dbReference>
<dbReference type="PDBsum" id="1T3J"/>
<dbReference type="SMR" id="Q811U4"/>
<dbReference type="BioGRID" id="212170">
    <property type="interactions" value="6"/>
</dbReference>
<dbReference type="DIP" id="DIP-60969N"/>
<dbReference type="FunCoup" id="Q811U4">
    <property type="interactions" value="2725"/>
</dbReference>
<dbReference type="IntAct" id="Q811U4">
    <property type="interactions" value="4"/>
</dbReference>
<dbReference type="STRING" id="10090.ENSMUSP00000088801"/>
<dbReference type="iPTMnet" id="Q811U4"/>
<dbReference type="PhosphoSitePlus" id="Q811U4"/>
<dbReference type="jPOST" id="Q811U4"/>
<dbReference type="PaxDb" id="10090-ENSMUSP00000088801"/>
<dbReference type="PeptideAtlas" id="Q811U4"/>
<dbReference type="ProteomicsDB" id="292227"/>
<dbReference type="Pumba" id="Q811U4"/>
<dbReference type="ABCD" id="Q811U4">
    <property type="antibodies" value="1 sequenced antibody"/>
</dbReference>
<dbReference type="Antibodypedia" id="33743">
    <property type="antibodies" value="559 antibodies from 41 providers"/>
</dbReference>
<dbReference type="DNASU" id="67414"/>
<dbReference type="Ensembl" id="ENSMUST00000091257.11">
    <property type="protein sequence ID" value="ENSMUSP00000088801.5"/>
    <property type="gene ID" value="ENSMUSG00000027668.14"/>
</dbReference>
<dbReference type="Ensembl" id="ENSMUST00000118286.8">
    <property type="protein sequence ID" value="ENSMUSP00000113251.2"/>
    <property type="gene ID" value="ENSMUSG00000027668.14"/>
</dbReference>
<dbReference type="GeneID" id="67414"/>
<dbReference type="KEGG" id="mmu:67414"/>
<dbReference type="UCSC" id="uc008owi.2">
    <property type="organism name" value="mouse"/>
</dbReference>
<dbReference type="AGR" id="MGI:1914664"/>
<dbReference type="CTD" id="55669"/>
<dbReference type="MGI" id="MGI:1914664">
    <property type="gene designation" value="Mfn1"/>
</dbReference>
<dbReference type="VEuPathDB" id="HostDB:ENSMUSG00000027668"/>
<dbReference type="eggNOG" id="KOG0448">
    <property type="taxonomic scope" value="Eukaryota"/>
</dbReference>
<dbReference type="GeneTree" id="ENSGT00390000013727"/>
<dbReference type="HOGENOM" id="CLU_021212_1_0_1"/>
<dbReference type="InParanoid" id="Q811U4"/>
<dbReference type="OMA" id="IMDTINV"/>
<dbReference type="OrthoDB" id="6256226at2759"/>
<dbReference type="PhylomeDB" id="Q811U4"/>
<dbReference type="TreeFam" id="TF314289"/>
<dbReference type="Reactome" id="R-MMU-5205685">
    <property type="pathway name" value="PINK1-PRKN Mediated Mitophagy"/>
</dbReference>
<dbReference type="Reactome" id="R-MMU-9013419">
    <property type="pathway name" value="RHOT2 GTPase cycle"/>
</dbReference>
<dbReference type="Reactome" id="R-MMU-983231">
    <property type="pathway name" value="Factors involved in megakaryocyte development and platelet production"/>
</dbReference>
<dbReference type="BioGRID-ORCS" id="67414">
    <property type="hits" value="17 hits in 76 CRISPR screens"/>
</dbReference>
<dbReference type="ChiTaRS" id="Mfn1">
    <property type="organism name" value="mouse"/>
</dbReference>
<dbReference type="EvolutionaryTrace" id="Q811U4"/>
<dbReference type="PRO" id="PR:Q811U4"/>
<dbReference type="Proteomes" id="UP000000589">
    <property type="component" value="Chromosome 3"/>
</dbReference>
<dbReference type="RNAct" id="Q811U4">
    <property type="molecule type" value="protein"/>
</dbReference>
<dbReference type="Bgee" id="ENSMUSG00000027668">
    <property type="expression patterns" value="Expressed in myocardium of ventricle and 259 other cell types or tissues"/>
</dbReference>
<dbReference type="ExpressionAtlas" id="Q811U4">
    <property type="expression patterns" value="baseline and differential"/>
</dbReference>
<dbReference type="GO" id="GO:0005741">
    <property type="term" value="C:mitochondrial outer membrane"/>
    <property type="evidence" value="ECO:0000250"/>
    <property type="project" value="UniProtKB"/>
</dbReference>
<dbReference type="GO" id="GO:0005739">
    <property type="term" value="C:mitochondrion"/>
    <property type="evidence" value="ECO:0007005"/>
    <property type="project" value="MGI"/>
</dbReference>
<dbReference type="GO" id="GO:0098799">
    <property type="term" value="C:outer mitochondrial membrane protein complex"/>
    <property type="evidence" value="ECO:0000250"/>
    <property type="project" value="UniProtKB"/>
</dbReference>
<dbReference type="GO" id="GO:0005525">
    <property type="term" value="F:GTP binding"/>
    <property type="evidence" value="ECO:0007669"/>
    <property type="project" value="UniProtKB-KW"/>
</dbReference>
<dbReference type="GO" id="GO:0003924">
    <property type="term" value="F:GTPase activity"/>
    <property type="evidence" value="ECO:0000250"/>
    <property type="project" value="UniProtKB"/>
</dbReference>
<dbReference type="GO" id="GO:0042802">
    <property type="term" value="F:identical protein binding"/>
    <property type="evidence" value="ECO:0007669"/>
    <property type="project" value="Ensembl"/>
</dbReference>
<dbReference type="GO" id="GO:0046039">
    <property type="term" value="P:GTP metabolic process"/>
    <property type="evidence" value="ECO:0000250"/>
    <property type="project" value="UniProtKB"/>
</dbReference>
<dbReference type="GO" id="GO:0008053">
    <property type="term" value="P:mitochondrial fusion"/>
    <property type="evidence" value="ECO:0000315"/>
    <property type="project" value="UniProtKB"/>
</dbReference>
<dbReference type="GO" id="GO:0051646">
    <property type="term" value="P:mitochondrion localization"/>
    <property type="evidence" value="ECO:0000250"/>
    <property type="project" value="UniProtKB"/>
</dbReference>
<dbReference type="GO" id="GO:0010918">
    <property type="term" value="P:positive regulation of mitochondrial membrane potential"/>
    <property type="evidence" value="ECO:0000316"/>
    <property type="project" value="CACAO"/>
</dbReference>
<dbReference type="CDD" id="cd09912">
    <property type="entry name" value="DLP_2"/>
    <property type="match status" value="1"/>
</dbReference>
<dbReference type="FunFam" id="1.20.5.110:FF:000012">
    <property type="entry name" value="Mitofusin 2"/>
    <property type="match status" value="1"/>
</dbReference>
<dbReference type="FunFam" id="3.40.50.300:FF:000214">
    <property type="entry name" value="Mitofusin 2"/>
    <property type="match status" value="1"/>
</dbReference>
<dbReference type="Gene3D" id="1.20.5.110">
    <property type="match status" value="1"/>
</dbReference>
<dbReference type="Gene3D" id="3.40.50.300">
    <property type="entry name" value="P-loop containing nucleotide triphosphate hydrolases"/>
    <property type="match status" value="1"/>
</dbReference>
<dbReference type="InterPro" id="IPR045063">
    <property type="entry name" value="Dynamin_N"/>
</dbReference>
<dbReference type="InterPro" id="IPR006884">
    <property type="entry name" value="Fzo/mitofusin_HR2"/>
</dbReference>
<dbReference type="InterPro" id="IPR030381">
    <property type="entry name" value="G_DYNAMIN_dom"/>
</dbReference>
<dbReference type="InterPro" id="IPR027094">
    <property type="entry name" value="Mitofusin_fam"/>
</dbReference>
<dbReference type="InterPro" id="IPR027417">
    <property type="entry name" value="P-loop_NTPase"/>
</dbReference>
<dbReference type="PANTHER" id="PTHR10465:SF2">
    <property type="entry name" value="MITOFUSIN-1"/>
    <property type="match status" value="1"/>
</dbReference>
<dbReference type="PANTHER" id="PTHR10465">
    <property type="entry name" value="TRANSMEMBRANE GTPASE FZO1"/>
    <property type="match status" value="1"/>
</dbReference>
<dbReference type="Pfam" id="PF00350">
    <property type="entry name" value="Dynamin_N"/>
    <property type="match status" value="1"/>
</dbReference>
<dbReference type="Pfam" id="PF04799">
    <property type="entry name" value="Fzo_mitofusin"/>
    <property type="match status" value="1"/>
</dbReference>
<dbReference type="SUPFAM" id="SSF111479">
    <property type="entry name" value="Fzo-like conserved region"/>
    <property type="match status" value="1"/>
</dbReference>
<dbReference type="SUPFAM" id="SSF52540">
    <property type="entry name" value="P-loop containing nucleoside triphosphate hydrolases"/>
    <property type="match status" value="1"/>
</dbReference>
<dbReference type="PROSITE" id="PS51718">
    <property type="entry name" value="G_DYNAMIN_2"/>
    <property type="match status" value="1"/>
</dbReference>
<protein>
    <recommendedName>
        <fullName>Mitofusin-1</fullName>
        <ecNumber evidence="1">3.6.5.-</ecNumber>
    </recommendedName>
    <alternativeName>
        <fullName>Transmembrane GTPase MFN1</fullName>
    </alternativeName>
</protein>